<gene>
    <name evidence="1" type="primary">rplQ</name>
    <name type="ordered locus">A1I_02165</name>
</gene>
<comment type="subunit">
    <text evidence="1">Part of the 50S ribosomal subunit. Contacts protein L32.</text>
</comment>
<comment type="similarity">
    <text evidence="1">Belongs to the bacterial ribosomal protein bL17 family.</text>
</comment>
<organism>
    <name type="scientific">Rickettsia bellii (strain OSU 85-389)</name>
    <dbReference type="NCBI Taxonomy" id="391896"/>
    <lineage>
        <taxon>Bacteria</taxon>
        <taxon>Pseudomonadati</taxon>
        <taxon>Pseudomonadota</taxon>
        <taxon>Alphaproteobacteria</taxon>
        <taxon>Rickettsiales</taxon>
        <taxon>Rickettsiaceae</taxon>
        <taxon>Rickettsieae</taxon>
        <taxon>Rickettsia</taxon>
        <taxon>belli group</taxon>
    </lineage>
</organism>
<accession>A8GVD8</accession>
<feature type="chain" id="PRO_1000055930" description="Large ribosomal subunit protein bL17">
    <location>
        <begin position="1"/>
        <end position="142"/>
    </location>
</feature>
<dbReference type="EMBL" id="CP000849">
    <property type="protein sequence ID" value="ABV78815.1"/>
    <property type="molecule type" value="Genomic_DNA"/>
</dbReference>
<dbReference type="RefSeq" id="WP_011477696.1">
    <property type="nucleotide sequence ID" value="NC_009883.1"/>
</dbReference>
<dbReference type="SMR" id="A8GVD8"/>
<dbReference type="KEGG" id="rbo:A1I_02165"/>
<dbReference type="HOGENOM" id="CLU_074407_2_0_5"/>
<dbReference type="GO" id="GO:0022625">
    <property type="term" value="C:cytosolic large ribosomal subunit"/>
    <property type="evidence" value="ECO:0007669"/>
    <property type="project" value="TreeGrafter"/>
</dbReference>
<dbReference type="GO" id="GO:0003735">
    <property type="term" value="F:structural constituent of ribosome"/>
    <property type="evidence" value="ECO:0007669"/>
    <property type="project" value="InterPro"/>
</dbReference>
<dbReference type="GO" id="GO:0006412">
    <property type="term" value="P:translation"/>
    <property type="evidence" value="ECO:0007669"/>
    <property type="project" value="UniProtKB-UniRule"/>
</dbReference>
<dbReference type="FunFam" id="3.90.1030.10:FF:000001">
    <property type="entry name" value="50S ribosomal protein L17"/>
    <property type="match status" value="1"/>
</dbReference>
<dbReference type="Gene3D" id="3.90.1030.10">
    <property type="entry name" value="Ribosomal protein L17"/>
    <property type="match status" value="1"/>
</dbReference>
<dbReference type="HAMAP" id="MF_01368">
    <property type="entry name" value="Ribosomal_bL17"/>
    <property type="match status" value="1"/>
</dbReference>
<dbReference type="InterPro" id="IPR000456">
    <property type="entry name" value="Ribosomal_bL17"/>
</dbReference>
<dbReference type="InterPro" id="IPR047859">
    <property type="entry name" value="Ribosomal_bL17_CS"/>
</dbReference>
<dbReference type="InterPro" id="IPR036373">
    <property type="entry name" value="Ribosomal_bL17_sf"/>
</dbReference>
<dbReference type="NCBIfam" id="TIGR00059">
    <property type="entry name" value="L17"/>
    <property type="match status" value="1"/>
</dbReference>
<dbReference type="PANTHER" id="PTHR14413:SF16">
    <property type="entry name" value="LARGE RIBOSOMAL SUBUNIT PROTEIN BL17M"/>
    <property type="match status" value="1"/>
</dbReference>
<dbReference type="PANTHER" id="PTHR14413">
    <property type="entry name" value="RIBOSOMAL PROTEIN L17"/>
    <property type="match status" value="1"/>
</dbReference>
<dbReference type="Pfam" id="PF01196">
    <property type="entry name" value="Ribosomal_L17"/>
    <property type="match status" value="1"/>
</dbReference>
<dbReference type="SUPFAM" id="SSF64263">
    <property type="entry name" value="Prokaryotic ribosomal protein L17"/>
    <property type="match status" value="1"/>
</dbReference>
<dbReference type="PROSITE" id="PS01167">
    <property type="entry name" value="RIBOSOMAL_L17"/>
    <property type="match status" value="1"/>
</dbReference>
<name>RL17_RICB8</name>
<reference key="1">
    <citation type="submission" date="2007-09" db="EMBL/GenBank/DDBJ databases">
        <title>Complete genome sequencing of Rickettsia bellii.</title>
        <authorList>
            <person name="Madan A."/>
            <person name="Lee H."/>
            <person name="Madan A."/>
            <person name="Yoon J.-G."/>
            <person name="Ryu G.-Y."/>
            <person name="Dasch G."/>
            <person name="Ereemeva M."/>
        </authorList>
    </citation>
    <scope>NUCLEOTIDE SEQUENCE [LARGE SCALE GENOMIC DNA]</scope>
    <source>
        <strain>OSU 85-389</strain>
    </source>
</reference>
<evidence type="ECO:0000255" key="1">
    <source>
        <dbReference type="HAMAP-Rule" id="MF_01368"/>
    </source>
</evidence>
<evidence type="ECO:0000305" key="2"/>
<protein>
    <recommendedName>
        <fullName evidence="1">Large ribosomal subunit protein bL17</fullName>
    </recommendedName>
    <alternativeName>
        <fullName evidence="2">50S ribosomal protein L17</fullName>
    </alternativeName>
</protein>
<sequence>MRHKIKGRKLNVTSSHRKAMLANMAVSLVTHEQIKTTLPKAKELRPYIEVLVTKAKDNNLAARRNILSKIKDKKAIEKLIDVLGVRYKDRPGGYTRIVKAGFRYGDLAPIAYIEFVDRDINAKGNIPQDNSKEDIKSNKGTK</sequence>
<proteinExistence type="inferred from homology"/>
<keyword id="KW-0687">Ribonucleoprotein</keyword>
<keyword id="KW-0689">Ribosomal protein</keyword>